<sequence length="182" mass="20671">MIKLTQEEQKYLLDSIRIIPDFPKKGIIFRDITTLLNNKEALNFLLKHLKERYKDYNLDFIAGTESRGFIFASMICAKLNLPFVPIRKPGKLPFETFSCEYDLEYGSDKVELHKDAFKNIQNARVLLVDDLIATGGTAIASYELIQKAGAKCVEACFLINLKDLNGANKLEKLTSVYSVLEI</sequence>
<protein>
    <recommendedName>
        <fullName evidence="1">Adenine phosphoribosyltransferase</fullName>
        <shortName evidence="1">APRT</shortName>
        <ecNumber evidence="1">2.4.2.7</ecNumber>
    </recommendedName>
</protein>
<comment type="function">
    <text evidence="1">Catalyzes a salvage reaction resulting in the formation of AMP, that is energically less costly than de novo synthesis.</text>
</comment>
<comment type="catalytic activity">
    <reaction evidence="1">
        <text>AMP + diphosphate = 5-phospho-alpha-D-ribose 1-diphosphate + adenine</text>
        <dbReference type="Rhea" id="RHEA:16609"/>
        <dbReference type="ChEBI" id="CHEBI:16708"/>
        <dbReference type="ChEBI" id="CHEBI:33019"/>
        <dbReference type="ChEBI" id="CHEBI:58017"/>
        <dbReference type="ChEBI" id="CHEBI:456215"/>
        <dbReference type="EC" id="2.4.2.7"/>
    </reaction>
</comment>
<comment type="pathway">
    <text evidence="1">Purine metabolism; AMP biosynthesis via salvage pathway; AMP from adenine: step 1/1.</text>
</comment>
<comment type="subunit">
    <text evidence="1">Homodimer.</text>
</comment>
<comment type="subcellular location">
    <subcellularLocation>
        <location evidence="1">Cytoplasm</location>
    </subcellularLocation>
</comment>
<comment type="similarity">
    <text evidence="1">Belongs to the purine/pyrimidine phosphoribosyltransferase family.</text>
</comment>
<feature type="chain" id="PRO_0000149368" description="Adenine phosphoribosyltransferase">
    <location>
        <begin position="1"/>
        <end position="182"/>
    </location>
</feature>
<evidence type="ECO:0000255" key="1">
    <source>
        <dbReference type="HAMAP-Rule" id="MF_00004"/>
    </source>
</evidence>
<reference key="1">
    <citation type="journal article" date="2000" name="Nature">
        <title>The genome sequence of the food-borne pathogen Campylobacter jejuni reveals hypervariable sequences.</title>
        <authorList>
            <person name="Parkhill J."/>
            <person name="Wren B.W."/>
            <person name="Mungall K.L."/>
            <person name="Ketley J.M."/>
            <person name="Churcher C.M."/>
            <person name="Basham D."/>
            <person name="Chillingworth T."/>
            <person name="Davies R.M."/>
            <person name="Feltwell T."/>
            <person name="Holroyd S."/>
            <person name="Jagels K."/>
            <person name="Karlyshev A.V."/>
            <person name="Moule S."/>
            <person name="Pallen M.J."/>
            <person name="Penn C.W."/>
            <person name="Quail M.A."/>
            <person name="Rajandream M.A."/>
            <person name="Rutherford K.M."/>
            <person name="van Vliet A.H.M."/>
            <person name="Whitehead S."/>
            <person name="Barrell B.G."/>
        </authorList>
    </citation>
    <scope>NUCLEOTIDE SEQUENCE [LARGE SCALE GENOMIC DNA]</scope>
    <source>
        <strain>ATCC 700819 / NCTC 11168</strain>
    </source>
</reference>
<organism>
    <name type="scientific">Campylobacter jejuni subsp. jejuni serotype O:2 (strain ATCC 700819 / NCTC 11168)</name>
    <dbReference type="NCBI Taxonomy" id="192222"/>
    <lineage>
        <taxon>Bacteria</taxon>
        <taxon>Pseudomonadati</taxon>
        <taxon>Campylobacterota</taxon>
        <taxon>Epsilonproteobacteria</taxon>
        <taxon>Campylobacterales</taxon>
        <taxon>Campylobacteraceae</taxon>
        <taxon>Campylobacter</taxon>
    </lineage>
</organism>
<accession>Q9PP06</accession>
<accession>Q0P9X2</accession>
<proteinExistence type="inferred from homology"/>
<keyword id="KW-0963">Cytoplasm</keyword>
<keyword id="KW-0328">Glycosyltransferase</keyword>
<keyword id="KW-0660">Purine salvage</keyword>
<keyword id="KW-1185">Reference proteome</keyword>
<keyword id="KW-0808">Transferase</keyword>
<dbReference type="EC" id="2.4.2.7" evidence="1"/>
<dbReference type="EMBL" id="AL111168">
    <property type="protein sequence ID" value="CAL35047.1"/>
    <property type="molecule type" value="Genomic_DNA"/>
</dbReference>
<dbReference type="PIR" id="F81366">
    <property type="entry name" value="F81366"/>
</dbReference>
<dbReference type="RefSeq" id="WP_002853297.1">
    <property type="nucleotide sequence ID" value="NZ_SZUC01000001.1"/>
</dbReference>
<dbReference type="RefSeq" id="YP_002344325.1">
    <property type="nucleotide sequence ID" value="NC_002163.1"/>
</dbReference>
<dbReference type="SMR" id="Q9PP06"/>
<dbReference type="IntAct" id="Q9PP06">
    <property type="interactions" value="13"/>
</dbReference>
<dbReference type="STRING" id="192222.Cj0927"/>
<dbReference type="PaxDb" id="192222-Cj0927"/>
<dbReference type="EnsemblBacteria" id="CAL35047">
    <property type="protein sequence ID" value="CAL35047"/>
    <property type="gene ID" value="Cj0927"/>
</dbReference>
<dbReference type="GeneID" id="905205"/>
<dbReference type="KEGG" id="cje:Cj0927"/>
<dbReference type="PATRIC" id="fig|192222.6.peg.911"/>
<dbReference type="eggNOG" id="COG0503">
    <property type="taxonomic scope" value="Bacteria"/>
</dbReference>
<dbReference type="HOGENOM" id="CLU_063339_3_0_7"/>
<dbReference type="OrthoDB" id="9803963at2"/>
<dbReference type="UniPathway" id="UPA00588">
    <property type="reaction ID" value="UER00646"/>
</dbReference>
<dbReference type="Proteomes" id="UP000000799">
    <property type="component" value="Chromosome"/>
</dbReference>
<dbReference type="GO" id="GO:0005737">
    <property type="term" value="C:cytoplasm"/>
    <property type="evidence" value="ECO:0007669"/>
    <property type="project" value="UniProtKB-SubCell"/>
</dbReference>
<dbReference type="GO" id="GO:0002055">
    <property type="term" value="F:adenine binding"/>
    <property type="evidence" value="ECO:0007669"/>
    <property type="project" value="TreeGrafter"/>
</dbReference>
<dbReference type="GO" id="GO:0003999">
    <property type="term" value="F:adenine phosphoribosyltransferase activity"/>
    <property type="evidence" value="ECO:0007669"/>
    <property type="project" value="UniProtKB-UniRule"/>
</dbReference>
<dbReference type="GO" id="GO:0016208">
    <property type="term" value="F:AMP binding"/>
    <property type="evidence" value="ECO:0007669"/>
    <property type="project" value="TreeGrafter"/>
</dbReference>
<dbReference type="GO" id="GO:0006168">
    <property type="term" value="P:adenine salvage"/>
    <property type="evidence" value="ECO:0007669"/>
    <property type="project" value="InterPro"/>
</dbReference>
<dbReference type="GO" id="GO:0044209">
    <property type="term" value="P:AMP salvage"/>
    <property type="evidence" value="ECO:0007669"/>
    <property type="project" value="UniProtKB-UniRule"/>
</dbReference>
<dbReference type="GO" id="GO:0006166">
    <property type="term" value="P:purine ribonucleoside salvage"/>
    <property type="evidence" value="ECO:0007669"/>
    <property type="project" value="UniProtKB-KW"/>
</dbReference>
<dbReference type="CDD" id="cd06223">
    <property type="entry name" value="PRTases_typeI"/>
    <property type="match status" value="1"/>
</dbReference>
<dbReference type="FunFam" id="3.40.50.2020:FF:000021">
    <property type="entry name" value="Adenine phosphoribosyltransferase"/>
    <property type="match status" value="1"/>
</dbReference>
<dbReference type="Gene3D" id="3.40.50.2020">
    <property type="match status" value="1"/>
</dbReference>
<dbReference type="HAMAP" id="MF_00004">
    <property type="entry name" value="Aden_phosphoribosyltr"/>
    <property type="match status" value="1"/>
</dbReference>
<dbReference type="InterPro" id="IPR005764">
    <property type="entry name" value="Ade_phspho_trans"/>
</dbReference>
<dbReference type="InterPro" id="IPR000836">
    <property type="entry name" value="PRibTrfase_dom"/>
</dbReference>
<dbReference type="InterPro" id="IPR029057">
    <property type="entry name" value="PRTase-like"/>
</dbReference>
<dbReference type="InterPro" id="IPR050054">
    <property type="entry name" value="UPRTase/APRTase"/>
</dbReference>
<dbReference type="NCBIfam" id="TIGR01090">
    <property type="entry name" value="apt"/>
    <property type="match status" value="1"/>
</dbReference>
<dbReference type="NCBIfam" id="NF002634">
    <property type="entry name" value="PRK02304.1-3"/>
    <property type="match status" value="1"/>
</dbReference>
<dbReference type="NCBIfam" id="NF002636">
    <property type="entry name" value="PRK02304.1-5"/>
    <property type="match status" value="1"/>
</dbReference>
<dbReference type="PANTHER" id="PTHR32315">
    <property type="entry name" value="ADENINE PHOSPHORIBOSYLTRANSFERASE"/>
    <property type="match status" value="1"/>
</dbReference>
<dbReference type="PANTHER" id="PTHR32315:SF3">
    <property type="entry name" value="ADENINE PHOSPHORIBOSYLTRANSFERASE"/>
    <property type="match status" value="1"/>
</dbReference>
<dbReference type="Pfam" id="PF00156">
    <property type="entry name" value="Pribosyltran"/>
    <property type="match status" value="1"/>
</dbReference>
<dbReference type="SUPFAM" id="SSF53271">
    <property type="entry name" value="PRTase-like"/>
    <property type="match status" value="1"/>
</dbReference>
<dbReference type="PROSITE" id="PS00103">
    <property type="entry name" value="PUR_PYR_PR_TRANSFER"/>
    <property type="match status" value="1"/>
</dbReference>
<name>APT_CAMJE</name>
<gene>
    <name evidence="1" type="primary">apt</name>
    <name type="ordered locus">Cj0927</name>
</gene>